<proteinExistence type="inferred from homology"/>
<name>EFP1_CHLTR</name>
<reference key="1">
    <citation type="journal article" date="1998" name="Science">
        <title>Genome sequence of an obligate intracellular pathogen of humans: Chlamydia trachomatis.</title>
        <authorList>
            <person name="Stephens R.S."/>
            <person name="Kalman S."/>
            <person name="Lammel C.J."/>
            <person name="Fan J."/>
            <person name="Marathe R."/>
            <person name="Aravind L."/>
            <person name="Mitchell W.P."/>
            <person name="Olinger L."/>
            <person name="Tatusov R.L."/>
            <person name="Zhao Q."/>
            <person name="Koonin E.V."/>
            <person name="Davis R.W."/>
        </authorList>
    </citation>
    <scope>NUCLEOTIDE SEQUENCE [LARGE SCALE GENOMIC DNA]</scope>
    <source>
        <strain>ATCC VR-885 / DSM 19411 / UW-3/Cx</strain>
    </source>
</reference>
<protein>
    <recommendedName>
        <fullName>Elongation factor P 1</fullName>
        <shortName>EF-P 1</shortName>
    </recommendedName>
</protein>
<accession>O84124</accession>
<sequence length="185" mass="20517">MVLSSQLSVGMFISTKDGLYKVVSVSKVSGNKGDTFIKVSLQAAGSDVTVERNFKAGQEVKEAQFEPRNLEYLYLEEDKYLFLDLGNYDKIYIPKEIMKDNAMFLKAGVTVFALVHEGTVFSMELPHFLELMVAKTDFPGDSLSLSGGAKKALLETGVEVLVPPFVEIGDVIKVDTRTCEYIQRV</sequence>
<organism>
    <name type="scientific">Chlamydia trachomatis serovar D (strain ATCC VR-885 / DSM 19411 / UW-3/Cx)</name>
    <dbReference type="NCBI Taxonomy" id="272561"/>
    <lineage>
        <taxon>Bacteria</taxon>
        <taxon>Pseudomonadati</taxon>
        <taxon>Chlamydiota</taxon>
        <taxon>Chlamydiia</taxon>
        <taxon>Chlamydiales</taxon>
        <taxon>Chlamydiaceae</taxon>
        <taxon>Chlamydia/Chlamydophila group</taxon>
        <taxon>Chlamydia</taxon>
    </lineage>
</organism>
<feature type="chain" id="PRO_0000094232" description="Elongation factor P 1">
    <location>
        <begin position="1"/>
        <end position="185"/>
    </location>
</feature>
<keyword id="KW-0963">Cytoplasm</keyword>
<keyword id="KW-0251">Elongation factor</keyword>
<keyword id="KW-0648">Protein biosynthesis</keyword>
<keyword id="KW-1185">Reference proteome</keyword>
<gene>
    <name type="primary">efp1</name>
    <name type="ordered locus">CT_122</name>
</gene>
<comment type="function">
    <text evidence="1">Involved in peptide bond synthesis. Stimulates efficient translation and peptide-bond synthesis on native or reconstituted 70S ribosomes in vitro. Probably functions indirectly by altering the affinity of the ribosome for aminoacyl-tRNA, thus increasing their reactivity as acceptors for peptidyl transferase (By similarity).</text>
</comment>
<comment type="pathway">
    <text>Protein biosynthesis; polypeptide chain elongation.</text>
</comment>
<comment type="subcellular location">
    <subcellularLocation>
        <location evidence="1">Cytoplasm</location>
    </subcellularLocation>
</comment>
<comment type="similarity">
    <text evidence="2">Belongs to the elongation factor P family.</text>
</comment>
<dbReference type="EMBL" id="AE001273">
    <property type="protein sequence ID" value="AAC67713.1"/>
    <property type="molecule type" value="Genomic_DNA"/>
</dbReference>
<dbReference type="PIR" id="F71553">
    <property type="entry name" value="F71553"/>
</dbReference>
<dbReference type="RefSeq" id="WP_010725076.1">
    <property type="nucleotide sequence ID" value="NC_000117.1"/>
</dbReference>
<dbReference type="SMR" id="O84124"/>
<dbReference type="STRING" id="272561.CT_122"/>
<dbReference type="EnsemblBacteria" id="AAC67713">
    <property type="protein sequence ID" value="AAC67713"/>
    <property type="gene ID" value="CT_122"/>
</dbReference>
<dbReference type="KEGG" id="ctr:CT_122"/>
<dbReference type="PATRIC" id="fig|272561.5.peg.134"/>
<dbReference type="HOGENOM" id="CLU_074944_0_1_0"/>
<dbReference type="InParanoid" id="O84124"/>
<dbReference type="OrthoDB" id="9801844at2"/>
<dbReference type="UniPathway" id="UPA00345"/>
<dbReference type="Proteomes" id="UP000000431">
    <property type="component" value="Chromosome"/>
</dbReference>
<dbReference type="GO" id="GO:0005737">
    <property type="term" value="C:cytoplasm"/>
    <property type="evidence" value="ECO:0000318"/>
    <property type="project" value="GO_Central"/>
</dbReference>
<dbReference type="GO" id="GO:0003746">
    <property type="term" value="F:translation elongation factor activity"/>
    <property type="evidence" value="ECO:0000318"/>
    <property type="project" value="GO_Central"/>
</dbReference>
<dbReference type="GO" id="GO:0043043">
    <property type="term" value="P:peptide biosynthetic process"/>
    <property type="evidence" value="ECO:0007669"/>
    <property type="project" value="InterPro"/>
</dbReference>
<dbReference type="CDD" id="cd05794">
    <property type="entry name" value="S1_EF-P_repeat_2"/>
    <property type="match status" value="1"/>
</dbReference>
<dbReference type="FunFam" id="2.40.50.140:FF:000004">
    <property type="entry name" value="Elongation factor P"/>
    <property type="match status" value="1"/>
</dbReference>
<dbReference type="Gene3D" id="2.30.30.30">
    <property type="match status" value="1"/>
</dbReference>
<dbReference type="Gene3D" id="2.40.50.140">
    <property type="entry name" value="Nucleic acid-binding proteins"/>
    <property type="match status" value="2"/>
</dbReference>
<dbReference type="HAMAP" id="MF_00141">
    <property type="entry name" value="EF_P"/>
    <property type="match status" value="1"/>
</dbReference>
<dbReference type="InterPro" id="IPR015365">
    <property type="entry name" value="Elong-fact-P_C"/>
</dbReference>
<dbReference type="InterPro" id="IPR012340">
    <property type="entry name" value="NA-bd_OB-fold"/>
</dbReference>
<dbReference type="InterPro" id="IPR014722">
    <property type="entry name" value="Rib_uL2_dom2"/>
</dbReference>
<dbReference type="InterPro" id="IPR020599">
    <property type="entry name" value="Transl_elong_fac_P/YeiP"/>
</dbReference>
<dbReference type="InterPro" id="IPR013185">
    <property type="entry name" value="Transl_elong_KOW-like"/>
</dbReference>
<dbReference type="InterPro" id="IPR001059">
    <property type="entry name" value="Transl_elong_P/YeiP_cen"/>
</dbReference>
<dbReference type="InterPro" id="IPR013852">
    <property type="entry name" value="Transl_elong_P/YeiP_CS"/>
</dbReference>
<dbReference type="InterPro" id="IPR011768">
    <property type="entry name" value="Transl_elongation_fac_P"/>
</dbReference>
<dbReference type="InterPro" id="IPR008991">
    <property type="entry name" value="Translation_prot_SH3-like_sf"/>
</dbReference>
<dbReference type="NCBIfam" id="NF009090">
    <property type="entry name" value="PRK12426.1"/>
    <property type="match status" value="1"/>
</dbReference>
<dbReference type="PANTHER" id="PTHR30053">
    <property type="entry name" value="ELONGATION FACTOR P"/>
    <property type="match status" value="1"/>
</dbReference>
<dbReference type="PANTHER" id="PTHR30053:SF12">
    <property type="entry name" value="ELONGATION FACTOR P (EF-P) FAMILY PROTEIN"/>
    <property type="match status" value="1"/>
</dbReference>
<dbReference type="Pfam" id="PF01132">
    <property type="entry name" value="EFP"/>
    <property type="match status" value="1"/>
</dbReference>
<dbReference type="Pfam" id="PF08207">
    <property type="entry name" value="EFP_N"/>
    <property type="match status" value="1"/>
</dbReference>
<dbReference type="Pfam" id="PF09285">
    <property type="entry name" value="Elong-fact-P_C"/>
    <property type="match status" value="1"/>
</dbReference>
<dbReference type="PIRSF" id="PIRSF005901">
    <property type="entry name" value="EF-P"/>
    <property type="match status" value="1"/>
</dbReference>
<dbReference type="SMART" id="SM01185">
    <property type="entry name" value="EFP"/>
    <property type="match status" value="1"/>
</dbReference>
<dbReference type="SMART" id="SM00841">
    <property type="entry name" value="Elong-fact-P_C"/>
    <property type="match status" value="1"/>
</dbReference>
<dbReference type="SUPFAM" id="SSF50249">
    <property type="entry name" value="Nucleic acid-binding proteins"/>
    <property type="match status" value="2"/>
</dbReference>
<dbReference type="SUPFAM" id="SSF50104">
    <property type="entry name" value="Translation proteins SH3-like domain"/>
    <property type="match status" value="1"/>
</dbReference>
<dbReference type="PROSITE" id="PS01275">
    <property type="entry name" value="EFP"/>
    <property type="match status" value="1"/>
</dbReference>
<evidence type="ECO:0000250" key="1"/>
<evidence type="ECO:0000305" key="2"/>